<keyword id="KW-0418">Kinase</keyword>
<keyword id="KW-0547">Nucleotide-binding</keyword>
<keyword id="KW-1185">Reference proteome</keyword>
<keyword id="KW-0723">Serine/threonine-protein kinase</keyword>
<keyword id="KW-0808">Transferase</keyword>
<comment type="function">
    <text evidence="1">Bifunctional serine/threonine kinase and phosphorylase involved in the regulation of the phosphoenolpyruvate synthase (PEPS) by catalyzing its phosphorylation/dephosphorylation.</text>
</comment>
<comment type="catalytic activity">
    <reaction evidence="1">
        <text>[pyruvate, water dikinase] + ADP = [pyruvate, water dikinase]-phosphate + AMP + H(+)</text>
        <dbReference type="Rhea" id="RHEA:46020"/>
        <dbReference type="Rhea" id="RHEA-COMP:11425"/>
        <dbReference type="Rhea" id="RHEA-COMP:11426"/>
        <dbReference type="ChEBI" id="CHEBI:15378"/>
        <dbReference type="ChEBI" id="CHEBI:43176"/>
        <dbReference type="ChEBI" id="CHEBI:68546"/>
        <dbReference type="ChEBI" id="CHEBI:456215"/>
        <dbReference type="ChEBI" id="CHEBI:456216"/>
        <dbReference type="EC" id="2.7.11.33"/>
    </reaction>
</comment>
<comment type="catalytic activity">
    <reaction evidence="1">
        <text>[pyruvate, water dikinase]-phosphate + phosphate + H(+) = [pyruvate, water dikinase] + diphosphate</text>
        <dbReference type="Rhea" id="RHEA:48580"/>
        <dbReference type="Rhea" id="RHEA-COMP:11425"/>
        <dbReference type="Rhea" id="RHEA-COMP:11426"/>
        <dbReference type="ChEBI" id="CHEBI:15378"/>
        <dbReference type="ChEBI" id="CHEBI:33019"/>
        <dbReference type="ChEBI" id="CHEBI:43176"/>
        <dbReference type="ChEBI" id="CHEBI:43474"/>
        <dbReference type="ChEBI" id="CHEBI:68546"/>
        <dbReference type="EC" id="2.7.4.28"/>
    </reaction>
</comment>
<comment type="similarity">
    <text evidence="1">Belongs to the pyruvate, phosphate/water dikinase regulatory protein family. PSRP subfamily.</text>
</comment>
<name>PSRP_BORA1</name>
<accession>Q2L142</accession>
<proteinExistence type="inferred from homology"/>
<organism>
    <name type="scientific">Bordetella avium (strain 197N)</name>
    <dbReference type="NCBI Taxonomy" id="360910"/>
    <lineage>
        <taxon>Bacteria</taxon>
        <taxon>Pseudomonadati</taxon>
        <taxon>Pseudomonadota</taxon>
        <taxon>Betaproteobacteria</taxon>
        <taxon>Burkholderiales</taxon>
        <taxon>Alcaligenaceae</taxon>
        <taxon>Bordetella</taxon>
    </lineage>
</organism>
<reference key="1">
    <citation type="journal article" date="2006" name="J. Bacteriol.">
        <title>Comparison of the genome sequence of the poultry pathogen Bordetella avium with those of B. bronchiseptica, B. pertussis, and B. parapertussis reveals extensive diversity in surface structures associated with host interaction.</title>
        <authorList>
            <person name="Sebaihia M."/>
            <person name="Preston A."/>
            <person name="Maskell D.J."/>
            <person name="Kuzmiak H."/>
            <person name="Connell T.D."/>
            <person name="King N.D."/>
            <person name="Orndorff P.E."/>
            <person name="Miyamoto D.M."/>
            <person name="Thomson N.R."/>
            <person name="Harris D."/>
            <person name="Goble A."/>
            <person name="Lord A."/>
            <person name="Murphy L."/>
            <person name="Quail M.A."/>
            <person name="Rutter S."/>
            <person name="Squares R."/>
            <person name="Squares S."/>
            <person name="Woodward J."/>
            <person name="Parkhill J."/>
            <person name="Temple L.M."/>
        </authorList>
    </citation>
    <scope>NUCLEOTIDE SEQUENCE [LARGE SCALE GENOMIC DNA]</scope>
    <source>
        <strain>197N</strain>
    </source>
</reference>
<gene>
    <name type="ordered locus">BAV1750</name>
</gene>
<protein>
    <recommendedName>
        <fullName evidence="1">Putative phosphoenolpyruvate synthase regulatory protein</fullName>
        <shortName evidence="1">PEP synthase regulatory protein</shortName>
        <shortName evidence="1">PSRP</shortName>
        <ecNumber evidence="1">2.7.11.33</ecNumber>
        <ecNumber evidence="1">2.7.4.28</ecNumber>
    </recommendedName>
    <alternativeName>
        <fullName evidence="1">Pyruvate, water dikinase regulatory protein</fullName>
    </alternativeName>
</protein>
<dbReference type="EC" id="2.7.11.33" evidence="1"/>
<dbReference type="EC" id="2.7.4.28" evidence="1"/>
<dbReference type="EMBL" id="AM167904">
    <property type="protein sequence ID" value="CAJ49359.1"/>
    <property type="molecule type" value="Genomic_DNA"/>
</dbReference>
<dbReference type="RefSeq" id="WP_012417420.1">
    <property type="nucleotide sequence ID" value="NC_010645.1"/>
</dbReference>
<dbReference type="SMR" id="Q2L142"/>
<dbReference type="STRING" id="360910.BAV1750"/>
<dbReference type="GeneID" id="92935188"/>
<dbReference type="KEGG" id="bav:BAV1750"/>
<dbReference type="eggNOG" id="COG1806">
    <property type="taxonomic scope" value="Bacteria"/>
</dbReference>
<dbReference type="HOGENOM" id="CLU_046206_1_0_4"/>
<dbReference type="OrthoDB" id="9782201at2"/>
<dbReference type="Proteomes" id="UP000001977">
    <property type="component" value="Chromosome"/>
</dbReference>
<dbReference type="GO" id="GO:0043531">
    <property type="term" value="F:ADP binding"/>
    <property type="evidence" value="ECO:0007669"/>
    <property type="project" value="UniProtKB-UniRule"/>
</dbReference>
<dbReference type="GO" id="GO:0005524">
    <property type="term" value="F:ATP binding"/>
    <property type="evidence" value="ECO:0007669"/>
    <property type="project" value="InterPro"/>
</dbReference>
<dbReference type="GO" id="GO:0016776">
    <property type="term" value="F:phosphotransferase activity, phosphate group as acceptor"/>
    <property type="evidence" value="ECO:0007669"/>
    <property type="project" value="UniProtKB-UniRule"/>
</dbReference>
<dbReference type="GO" id="GO:0004674">
    <property type="term" value="F:protein serine/threonine kinase activity"/>
    <property type="evidence" value="ECO:0007669"/>
    <property type="project" value="UniProtKB-UniRule"/>
</dbReference>
<dbReference type="HAMAP" id="MF_01062">
    <property type="entry name" value="PSRP"/>
    <property type="match status" value="1"/>
</dbReference>
<dbReference type="InterPro" id="IPR005177">
    <property type="entry name" value="Kinase-pyrophosphorylase"/>
</dbReference>
<dbReference type="InterPro" id="IPR026530">
    <property type="entry name" value="PSRP"/>
</dbReference>
<dbReference type="NCBIfam" id="NF003742">
    <property type="entry name" value="PRK05339.1"/>
    <property type="match status" value="1"/>
</dbReference>
<dbReference type="PANTHER" id="PTHR31756">
    <property type="entry name" value="PYRUVATE, PHOSPHATE DIKINASE REGULATORY PROTEIN 1, CHLOROPLASTIC"/>
    <property type="match status" value="1"/>
</dbReference>
<dbReference type="PANTHER" id="PTHR31756:SF3">
    <property type="entry name" value="PYRUVATE, PHOSPHATE DIKINASE REGULATORY PROTEIN 1, CHLOROPLASTIC"/>
    <property type="match status" value="1"/>
</dbReference>
<dbReference type="Pfam" id="PF03618">
    <property type="entry name" value="Kinase-PPPase"/>
    <property type="match status" value="1"/>
</dbReference>
<feature type="chain" id="PRO_0000316638" description="Putative phosphoenolpyruvate synthase regulatory protein">
    <location>
        <begin position="1"/>
        <end position="274"/>
    </location>
</feature>
<feature type="binding site" evidence="1">
    <location>
        <begin position="157"/>
        <end position="164"/>
    </location>
    <ligand>
        <name>ADP</name>
        <dbReference type="ChEBI" id="CHEBI:456216"/>
    </ligand>
</feature>
<sequence>MSASSIARTVYIVSDSTGITAETFSQSVLSQFDQVDFKPIRLPFIDTLQKAEETAERINKNAADTGVPPIVFSTLVNPEILARVRQANGVFLDLFGTFVSHIEQALGLKSSPSIGRSHMQADSEKYRNRIDAINFSLAHDDGQFVNQLDQADVILVGVSRCGKTPTSLYLAMQYAIKAANFPLTPDDFERSSLPKTIAPYRDKLFGLSIQPERLSEVRNERRPNSRYATIEQCRYEVAEAERMMRRAGISWLSTTTKSIEEIATTVLQEVGLGR</sequence>
<evidence type="ECO:0000255" key="1">
    <source>
        <dbReference type="HAMAP-Rule" id="MF_01062"/>
    </source>
</evidence>